<proteinExistence type="inferred from homology"/>
<name>PNO1_CAEBR</name>
<comment type="function">
    <text evidence="1">Part of the small subunit (SSU) processome, first precursor of the small eukaryotic ribosomal subunit. During the assembly of the SSU processome in the nucleolus, many ribosome biogenesis factors, an RNA chaperone and ribosomal proteins associate with the nascent pre-rRNA and work in concert to generate RNA folding, modifications, rearrangements and cleavage as well as targeted degradation of pre-ribosomal RNA by the RNA exosome. Positively regulates dimethylation of two adjacent adenosines in the loop of a conserved hairpin near the 3'-end of 18S rRNA.</text>
</comment>
<comment type="subunit">
    <text evidence="1">Part of the small subunit (SSU) processome, composed of more than 70 proteins and the RNA chaperone small nucleolar RNA (snoRNA) U3.</text>
</comment>
<comment type="subcellular location">
    <subcellularLocation>
        <location evidence="1">Nucleus</location>
        <location evidence="1">Nucleolus</location>
    </subcellularLocation>
</comment>
<comment type="similarity">
    <text evidence="3">Belongs to the PNO1 family.</text>
</comment>
<sequence>MATSSSAFDDEFPMEEGMPELLDDEDVPSTLPSLLEQNMDTALKSNEFKLVKRKRRAGNAVDVVMEDISQPDDSTTDSPDADAEQKPTKRSKGSKGESRVVPVPKHRYTPLKDNWVNIFTPIVKNLGLQIRFNLKKRQVELRNPADREDTTDLQKATDFVRAFILGFEVNDAIALIRLDHLFLETFEIADVKHSLKGDHVSRAIGRIAGKDGRTKLVIENTTKTRIVVANTKIHILGAYQNLKLARNAVCSLILGSNPSKVYGNLRNMASRGAERL</sequence>
<gene>
    <name evidence="4" type="primary">pno-1</name>
    <name evidence="4" type="ORF">CBG01042</name>
</gene>
<accession>Q626C1</accession>
<accession>A8WP14</accession>
<protein>
    <recommendedName>
        <fullName>RNA-binding protein pno-1</fullName>
    </recommendedName>
</protein>
<organism>
    <name type="scientific">Caenorhabditis briggsae</name>
    <dbReference type="NCBI Taxonomy" id="6238"/>
    <lineage>
        <taxon>Eukaryota</taxon>
        <taxon>Metazoa</taxon>
        <taxon>Ecdysozoa</taxon>
        <taxon>Nematoda</taxon>
        <taxon>Chromadorea</taxon>
        <taxon>Rhabditida</taxon>
        <taxon>Rhabditina</taxon>
        <taxon>Rhabditomorpha</taxon>
        <taxon>Rhabditoidea</taxon>
        <taxon>Rhabditidae</taxon>
        <taxon>Peloderinae</taxon>
        <taxon>Caenorhabditis</taxon>
    </lineage>
</organism>
<keyword id="KW-0539">Nucleus</keyword>
<keyword id="KW-1185">Reference proteome</keyword>
<keyword id="KW-0694">RNA-binding</keyword>
<reference key="1">
    <citation type="journal article" date="2003" name="PLoS Biol.">
        <title>The genome sequence of Caenorhabditis briggsae: a platform for comparative genomics.</title>
        <authorList>
            <person name="Stein L.D."/>
            <person name="Bao Z."/>
            <person name="Blasiar D."/>
            <person name="Blumenthal T."/>
            <person name="Brent M.R."/>
            <person name="Chen N."/>
            <person name="Chinwalla A."/>
            <person name="Clarke L."/>
            <person name="Clee C."/>
            <person name="Coghlan A."/>
            <person name="Coulson A."/>
            <person name="D'Eustachio P."/>
            <person name="Fitch D.H.A."/>
            <person name="Fulton L.A."/>
            <person name="Fulton R.E."/>
            <person name="Griffiths-Jones S."/>
            <person name="Harris T.W."/>
            <person name="Hillier L.W."/>
            <person name="Kamath R."/>
            <person name="Kuwabara P.E."/>
            <person name="Mardis E.R."/>
            <person name="Marra M.A."/>
            <person name="Miner T.L."/>
            <person name="Minx P."/>
            <person name="Mullikin J.C."/>
            <person name="Plumb R.W."/>
            <person name="Rogers J."/>
            <person name="Schein J.E."/>
            <person name="Sohrmann M."/>
            <person name="Spieth J."/>
            <person name="Stajich J.E."/>
            <person name="Wei C."/>
            <person name="Willey D."/>
            <person name="Wilson R.K."/>
            <person name="Durbin R.M."/>
            <person name="Waterston R.H."/>
        </authorList>
    </citation>
    <scope>NUCLEOTIDE SEQUENCE [LARGE SCALE GENOMIC DNA]</scope>
    <source>
        <strain>AF16</strain>
    </source>
</reference>
<dbReference type="EMBL" id="HE600951">
    <property type="protein sequence ID" value="CAP22220.1"/>
    <property type="molecule type" value="Genomic_DNA"/>
</dbReference>
<dbReference type="RefSeq" id="XP_002629799.1">
    <property type="nucleotide sequence ID" value="XM_002629753.1"/>
</dbReference>
<dbReference type="SMR" id="Q626C1"/>
<dbReference type="FunCoup" id="Q626C1">
    <property type="interactions" value="2013"/>
</dbReference>
<dbReference type="STRING" id="6238.Q626C1"/>
<dbReference type="EnsemblMetazoa" id="CBG01042.1">
    <property type="protein sequence ID" value="CBG01042.1"/>
    <property type="gene ID" value="WBGene00024334"/>
</dbReference>
<dbReference type="GeneID" id="8572876"/>
<dbReference type="KEGG" id="cbr:CBG_01042"/>
<dbReference type="CTD" id="8572876"/>
<dbReference type="WormBase" id="CBG01042">
    <property type="protein sequence ID" value="CBP00232"/>
    <property type="gene ID" value="WBGene00024334"/>
    <property type="gene designation" value="Cbr-pno-1"/>
</dbReference>
<dbReference type="eggNOG" id="KOG3273">
    <property type="taxonomic scope" value="Eukaryota"/>
</dbReference>
<dbReference type="HOGENOM" id="CLU_064992_2_1_1"/>
<dbReference type="InParanoid" id="Q626C1"/>
<dbReference type="OMA" id="TPLRNNW"/>
<dbReference type="Proteomes" id="UP000008549">
    <property type="component" value="Unassembled WGS sequence"/>
</dbReference>
<dbReference type="GO" id="GO:0005730">
    <property type="term" value="C:nucleolus"/>
    <property type="evidence" value="ECO:0000250"/>
    <property type="project" value="UniProtKB"/>
</dbReference>
<dbReference type="GO" id="GO:0005634">
    <property type="term" value="C:nucleus"/>
    <property type="evidence" value="ECO:0000318"/>
    <property type="project" value="GO_Central"/>
</dbReference>
<dbReference type="GO" id="GO:0032040">
    <property type="term" value="C:small-subunit processome"/>
    <property type="evidence" value="ECO:0000250"/>
    <property type="project" value="UniProtKB"/>
</dbReference>
<dbReference type="GO" id="GO:0003723">
    <property type="term" value="F:RNA binding"/>
    <property type="evidence" value="ECO:0007669"/>
    <property type="project" value="UniProtKB-KW"/>
</dbReference>
<dbReference type="GO" id="GO:0042274">
    <property type="term" value="P:ribosomal small subunit biogenesis"/>
    <property type="evidence" value="ECO:0000250"/>
    <property type="project" value="UniProtKB"/>
</dbReference>
<dbReference type="CDD" id="cd22391">
    <property type="entry name" value="KH-I_PNO1_rpt1"/>
    <property type="match status" value="1"/>
</dbReference>
<dbReference type="CDD" id="cd22392">
    <property type="entry name" value="KH-I_PNO1_rpt2"/>
    <property type="match status" value="1"/>
</dbReference>
<dbReference type="FunFam" id="3.30.1370.10:FF:000009">
    <property type="entry name" value="RNA-binding protein PNO1"/>
    <property type="match status" value="1"/>
</dbReference>
<dbReference type="FunFam" id="3.30.1370.10:FF:000048">
    <property type="entry name" value="RNA-binding protein PNO1 isoform X2"/>
    <property type="match status" value="1"/>
</dbReference>
<dbReference type="Gene3D" id="3.30.1370.10">
    <property type="entry name" value="K Homology domain, type 1"/>
    <property type="match status" value="1"/>
</dbReference>
<dbReference type="InterPro" id="IPR055212">
    <property type="entry name" value="KH-I_PNO1_first"/>
</dbReference>
<dbReference type="InterPro" id="IPR004087">
    <property type="entry name" value="KH_dom"/>
</dbReference>
<dbReference type="InterPro" id="IPR036612">
    <property type="entry name" value="KH_dom_type_1_sf"/>
</dbReference>
<dbReference type="InterPro" id="IPR055211">
    <property type="entry name" value="KH_PNO1_2nd"/>
</dbReference>
<dbReference type="PANTHER" id="PTHR12826">
    <property type="entry name" value="RIBONUCLEASE Y"/>
    <property type="match status" value="1"/>
</dbReference>
<dbReference type="PANTHER" id="PTHR12826:SF13">
    <property type="entry name" value="RNA-BINDING PROTEIN PNO1"/>
    <property type="match status" value="1"/>
</dbReference>
<dbReference type="Pfam" id="PF22891">
    <property type="entry name" value="KH_PNO1_2nd"/>
    <property type="match status" value="1"/>
</dbReference>
<dbReference type="SMART" id="SM00322">
    <property type="entry name" value="KH"/>
    <property type="match status" value="1"/>
</dbReference>
<dbReference type="SUPFAM" id="SSF54791">
    <property type="entry name" value="Eukaryotic type KH-domain (KH-domain type I)"/>
    <property type="match status" value="1"/>
</dbReference>
<feature type="chain" id="PRO_0000270548" description="RNA-binding protein pno-1">
    <location>
        <begin position="1"/>
        <end position="276"/>
    </location>
</feature>
<feature type="domain" description="KH">
    <location>
        <begin position="197"/>
        <end position="249"/>
    </location>
</feature>
<feature type="region of interest" description="Disordered" evidence="2">
    <location>
        <begin position="1"/>
        <end position="30"/>
    </location>
</feature>
<feature type="region of interest" description="Disordered" evidence="2">
    <location>
        <begin position="62"/>
        <end position="101"/>
    </location>
</feature>
<feature type="compositionally biased region" description="Acidic residues" evidence="2">
    <location>
        <begin position="8"/>
        <end position="27"/>
    </location>
</feature>
<evidence type="ECO:0000250" key="1">
    <source>
        <dbReference type="UniProtKB" id="Q9NRX1"/>
    </source>
</evidence>
<evidence type="ECO:0000256" key="2">
    <source>
        <dbReference type="SAM" id="MobiDB-lite"/>
    </source>
</evidence>
<evidence type="ECO:0000305" key="3"/>
<evidence type="ECO:0000312" key="4">
    <source>
        <dbReference type="WormBase" id="CBG01042"/>
    </source>
</evidence>